<organism>
    <name type="scientific">Nitrosopumilus maritimus (strain SCM1)</name>
    <dbReference type="NCBI Taxonomy" id="436308"/>
    <lineage>
        <taxon>Archaea</taxon>
        <taxon>Nitrososphaerota</taxon>
        <taxon>Nitrososphaeria</taxon>
        <taxon>Nitrosopumilales</taxon>
        <taxon>Nitrosopumilaceae</taxon>
        <taxon>Nitrosopumilus</taxon>
    </lineage>
</organism>
<sequence>MTKNQDRMKSHTMELPRQIVVGEKNINEFGEFLHNLTKPKKVSLISGIHVKKVLRQRIEKSLKTKRIKFVWHTSKDNQISTLNRIEKEVKKDRSDMIAGIGGGRSVDTAKLISFNLDIPFVSVPTAASHDGVSSPFVSVKSDKPHSIVATAPLGVFVDIDIIKKAPSRLLASGCGDLVANIIAVKDWQLGHQKTGEYYGTYSAELAMMSAMMVLDNSSKYAKNGLDARVIVEALISAGVASCIAGSSRPCSGAEHLFSHALDKIAPGKGLHGEKCGIGSIMIAKLQGQDWKKIVKTLKDVGAPTTAKQIGLTEDQIIDALIIAQDLRPERYTILKEVEMTDRKAKSLAKSTKVI</sequence>
<comment type="function">
    <text evidence="1">Catalyzes the NAD(P)H-dependent reduction of dihydroxyacetonephosphate (DHAP or glycerone phosphate) to glycerol 1-phosphate (G1P). The G1P thus generated is used as the glycerophosphate backbone of phospholipids in the cellular membranes of Archaea.</text>
</comment>
<comment type="catalytic activity">
    <reaction evidence="1">
        <text>sn-glycerol 1-phosphate + NAD(+) = dihydroxyacetone phosphate + NADH + H(+)</text>
        <dbReference type="Rhea" id="RHEA:21412"/>
        <dbReference type="ChEBI" id="CHEBI:15378"/>
        <dbReference type="ChEBI" id="CHEBI:57540"/>
        <dbReference type="ChEBI" id="CHEBI:57642"/>
        <dbReference type="ChEBI" id="CHEBI:57685"/>
        <dbReference type="ChEBI" id="CHEBI:57945"/>
        <dbReference type="EC" id="1.1.1.261"/>
    </reaction>
</comment>
<comment type="catalytic activity">
    <reaction evidence="1">
        <text>sn-glycerol 1-phosphate + NADP(+) = dihydroxyacetone phosphate + NADPH + H(+)</text>
        <dbReference type="Rhea" id="RHEA:21416"/>
        <dbReference type="ChEBI" id="CHEBI:15378"/>
        <dbReference type="ChEBI" id="CHEBI:57642"/>
        <dbReference type="ChEBI" id="CHEBI:57685"/>
        <dbReference type="ChEBI" id="CHEBI:57783"/>
        <dbReference type="ChEBI" id="CHEBI:58349"/>
        <dbReference type="EC" id="1.1.1.261"/>
    </reaction>
</comment>
<comment type="cofactor">
    <cofactor evidence="1">
        <name>Zn(2+)</name>
        <dbReference type="ChEBI" id="CHEBI:29105"/>
    </cofactor>
    <text evidence="1">Binds 1 zinc ion per subunit.</text>
</comment>
<comment type="pathway">
    <text evidence="1">Membrane lipid metabolism; glycerophospholipid metabolism.</text>
</comment>
<comment type="subunit">
    <text evidence="1">Homodimer.</text>
</comment>
<comment type="subcellular location">
    <subcellularLocation>
        <location evidence="1">Cytoplasm</location>
    </subcellularLocation>
</comment>
<comment type="similarity">
    <text evidence="1">Belongs to the glycerol-1-phosphate dehydrogenase family.</text>
</comment>
<name>G1PDH_NITMS</name>
<keyword id="KW-0963">Cytoplasm</keyword>
<keyword id="KW-0444">Lipid biosynthesis</keyword>
<keyword id="KW-0443">Lipid metabolism</keyword>
<keyword id="KW-0479">Metal-binding</keyword>
<keyword id="KW-0520">NAD</keyword>
<keyword id="KW-0521">NADP</keyword>
<keyword id="KW-0560">Oxidoreductase</keyword>
<keyword id="KW-0594">Phospholipid biosynthesis</keyword>
<keyword id="KW-1208">Phospholipid metabolism</keyword>
<keyword id="KW-1185">Reference proteome</keyword>
<keyword id="KW-0862">Zinc</keyword>
<accession>A9A2U8</accession>
<reference key="1">
    <citation type="journal article" date="2010" name="Proc. Natl. Acad. Sci. U.S.A.">
        <title>Nitrosopumilus maritimus genome reveals unique mechanisms for nitrification and autotrophy in globally distributed marine crenarchaea.</title>
        <authorList>
            <person name="Walker C.B."/>
            <person name="de la Torre J.R."/>
            <person name="Klotz M.G."/>
            <person name="Urakawa H."/>
            <person name="Pinel N."/>
            <person name="Arp D.J."/>
            <person name="Brochier-Armanet C."/>
            <person name="Chain P.S."/>
            <person name="Chan P.P."/>
            <person name="Gollabgir A."/>
            <person name="Hemp J."/>
            <person name="Hugler M."/>
            <person name="Karr E.A."/>
            <person name="Konneke M."/>
            <person name="Shin M."/>
            <person name="Lawton T.J."/>
            <person name="Lowe T."/>
            <person name="Martens-Habbena W."/>
            <person name="Sayavedra-Soto L.A."/>
            <person name="Lang D."/>
            <person name="Sievert S.M."/>
            <person name="Rosenzweig A.C."/>
            <person name="Manning G."/>
            <person name="Stahl D.A."/>
        </authorList>
    </citation>
    <scope>NUCLEOTIDE SEQUENCE [LARGE SCALE GENOMIC DNA]</scope>
    <source>
        <strain>SCM1</strain>
    </source>
</reference>
<feature type="chain" id="PRO_0000350660" description="Glycerol-1-phosphate dehydrogenase [NAD(P)+]">
    <location>
        <begin position="1"/>
        <end position="354"/>
    </location>
</feature>
<feature type="binding site" evidence="1">
    <location>
        <begin position="103"/>
        <end position="107"/>
    </location>
    <ligand>
        <name>NAD(+)</name>
        <dbReference type="ChEBI" id="CHEBI:57540"/>
    </ligand>
</feature>
<feature type="binding site" evidence="1">
    <location>
        <begin position="125"/>
        <end position="128"/>
    </location>
    <ligand>
        <name>NAD(+)</name>
        <dbReference type="ChEBI" id="CHEBI:57540"/>
    </ligand>
</feature>
<feature type="binding site" evidence="1">
    <location>
        <position position="130"/>
    </location>
    <ligand>
        <name>substrate</name>
    </ligand>
</feature>
<feature type="binding site" evidence="1">
    <location>
        <position position="134"/>
    </location>
    <ligand>
        <name>NAD(+)</name>
        <dbReference type="ChEBI" id="CHEBI:57540"/>
    </ligand>
</feature>
<feature type="binding site" evidence="1">
    <location>
        <position position="176"/>
    </location>
    <ligand>
        <name>substrate</name>
    </ligand>
</feature>
<feature type="binding site" evidence="1">
    <location>
        <position position="176"/>
    </location>
    <ligand>
        <name>Zn(2+)</name>
        <dbReference type="ChEBI" id="CHEBI:29105"/>
        <note>catalytic</note>
    </ligand>
</feature>
<feature type="binding site" evidence="1">
    <location>
        <position position="255"/>
    </location>
    <ligand>
        <name>Zn(2+)</name>
        <dbReference type="ChEBI" id="CHEBI:29105"/>
        <note>catalytic</note>
    </ligand>
</feature>
<feature type="binding site" evidence="1">
    <location>
        <position position="259"/>
    </location>
    <ligand>
        <name>substrate</name>
    </ligand>
</feature>
<feature type="binding site" evidence="1">
    <location>
        <position position="271"/>
    </location>
    <ligand>
        <name>Zn(2+)</name>
        <dbReference type="ChEBI" id="CHEBI:29105"/>
        <note>catalytic</note>
    </ligand>
</feature>
<gene>
    <name evidence="1" type="primary">egsA</name>
    <name type="ordered locus">Nmar_1729</name>
</gene>
<protein>
    <recommendedName>
        <fullName evidence="1">Glycerol-1-phosphate dehydrogenase [NAD(P)+]</fullName>
        <shortName evidence="1">G1P dehydrogenase</shortName>
        <shortName evidence="1">G1PDH</shortName>
        <ecNumber evidence="1">1.1.1.261</ecNumber>
    </recommendedName>
    <alternativeName>
        <fullName evidence="1">Enantiomeric glycerophosphate synthase</fullName>
    </alternativeName>
    <alternativeName>
        <fullName evidence="1">sn-glycerol-1-phosphate dehydrogenase</fullName>
    </alternativeName>
</protein>
<evidence type="ECO:0000255" key="1">
    <source>
        <dbReference type="HAMAP-Rule" id="MF_00497"/>
    </source>
</evidence>
<proteinExistence type="inferred from homology"/>
<dbReference type="EC" id="1.1.1.261" evidence="1"/>
<dbReference type="EMBL" id="CP000866">
    <property type="protein sequence ID" value="ABX13625.1"/>
    <property type="molecule type" value="Genomic_DNA"/>
</dbReference>
<dbReference type="RefSeq" id="WP_012216111.1">
    <property type="nucleotide sequence ID" value="NC_010085.1"/>
</dbReference>
<dbReference type="SMR" id="A9A2U8"/>
<dbReference type="STRING" id="436308.Nmar_1729"/>
<dbReference type="EnsemblBacteria" id="ABX13625">
    <property type="protein sequence ID" value="ABX13625"/>
    <property type="gene ID" value="Nmar_1729"/>
</dbReference>
<dbReference type="GeneID" id="5774203"/>
<dbReference type="KEGG" id="nmr:Nmar_1729"/>
<dbReference type="eggNOG" id="arCOG00982">
    <property type="taxonomic scope" value="Archaea"/>
</dbReference>
<dbReference type="HOGENOM" id="CLU_038362_0_0_2"/>
<dbReference type="InParanoid" id="A9A2U8"/>
<dbReference type="OrthoDB" id="8656at2157"/>
<dbReference type="PhylomeDB" id="A9A2U8"/>
<dbReference type="UniPathway" id="UPA00940"/>
<dbReference type="Proteomes" id="UP000000792">
    <property type="component" value="Chromosome"/>
</dbReference>
<dbReference type="GO" id="GO:0005737">
    <property type="term" value="C:cytoplasm"/>
    <property type="evidence" value="ECO:0007669"/>
    <property type="project" value="UniProtKB-SubCell"/>
</dbReference>
<dbReference type="GO" id="GO:0106357">
    <property type="term" value="F:glycerol-1-phosphate dehydrogenase (NAD+) activity"/>
    <property type="evidence" value="ECO:0007669"/>
    <property type="project" value="RHEA"/>
</dbReference>
<dbReference type="GO" id="GO:0106358">
    <property type="term" value="F:glycerol-1-phosphate dehydrogenase (NADP+) activity"/>
    <property type="evidence" value="ECO:0007669"/>
    <property type="project" value="RHEA"/>
</dbReference>
<dbReference type="GO" id="GO:0046872">
    <property type="term" value="F:metal ion binding"/>
    <property type="evidence" value="ECO:0007669"/>
    <property type="project" value="UniProtKB-KW"/>
</dbReference>
<dbReference type="GO" id="GO:0006650">
    <property type="term" value="P:glycerophospholipid metabolic process"/>
    <property type="evidence" value="ECO:0007669"/>
    <property type="project" value="UniProtKB-UniRule"/>
</dbReference>
<dbReference type="GO" id="GO:0008654">
    <property type="term" value="P:phospholipid biosynthetic process"/>
    <property type="evidence" value="ECO:0007669"/>
    <property type="project" value="UniProtKB-KW"/>
</dbReference>
<dbReference type="CDD" id="cd08173">
    <property type="entry name" value="Gro1PDH"/>
    <property type="match status" value="1"/>
</dbReference>
<dbReference type="Gene3D" id="3.40.50.1970">
    <property type="match status" value="1"/>
</dbReference>
<dbReference type="Gene3D" id="1.20.1090.10">
    <property type="entry name" value="Dehydroquinate synthase-like - alpha domain"/>
    <property type="match status" value="1"/>
</dbReference>
<dbReference type="HAMAP" id="MF_00497_A">
    <property type="entry name" value="G1P_dehydrogenase_A"/>
    <property type="match status" value="1"/>
</dbReference>
<dbReference type="InterPro" id="IPR023002">
    <property type="entry name" value="G1P_dehydrogenase_arc"/>
</dbReference>
<dbReference type="InterPro" id="IPR032837">
    <property type="entry name" value="G1PDH"/>
</dbReference>
<dbReference type="InterPro" id="IPR016205">
    <property type="entry name" value="Glycerol_DH"/>
</dbReference>
<dbReference type="PANTHER" id="PTHR43616">
    <property type="entry name" value="GLYCEROL DEHYDROGENASE"/>
    <property type="match status" value="1"/>
</dbReference>
<dbReference type="PANTHER" id="PTHR43616:SF5">
    <property type="entry name" value="GLYCEROL DEHYDROGENASE 1"/>
    <property type="match status" value="1"/>
</dbReference>
<dbReference type="Pfam" id="PF13685">
    <property type="entry name" value="Fe-ADH_2"/>
    <property type="match status" value="1"/>
</dbReference>
<dbReference type="PIRSF" id="PIRSF000112">
    <property type="entry name" value="Glycerol_dehydrogenase"/>
    <property type="match status" value="1"/>
</dbReference>
<dbReference type="SUPFAM" id="SSF56796">
    <property type="entry name" value="Dehydroquinate synthase-like"/>
    <property type="match status" value="1"/>
</dbReference>